<protein>
    <recommendedName>
        <fullName>ADP-ribosylation factor-like protein 13A</fullName>
    </recommendedName>
</protein>
<organism>
    <name type="scientific">Homo sapiens</name>
    <name type="common">Human</name>
    <dbReference type="NCBI Taxonomy" id="9606"/>
    <lineage>
        <taxon>Eukaryota</taxon>
        <taxon>Metazoa</taxon>
        <taxon>Chordata</taxon>
        <taxon>Craniata</taxon>
        <taxon>Vertebrata</taxon>
        <taxon>Euteleostomi</taxon>
        <taxon>Mammalia</taxon>
        <taxon>Eutheria</taxon>
        <taxon>Euarchontoglires</taxon>
        <taxon>Primates</taxon>
        <taxon>Haplorrhini</taxon>
        <taxon>Catarrhini</taxon>
        <taxon>Hominidae</taxon>
        <taxon>Homo</taxon>
    </lineage>
</organism>
<evidence type="ECO:0000250" key="1"/>
<evidence type="ECO:0000256" key="2">
    <source>
        <dbReference type="SAM" id="MobiDB-lite"/>
    </source>
</evidence>
<evidence type="ECO:0000303" key="3">
    <source>
    </source>
</evidence>
<evidence type="ECO:0000305" key="4"/>
<dbReference type="EMBL" id="AK301813">
    <property type="protein sequence ID" value="BAG63262.1"/>
    <property type="molecule type" value="mRNA"/>
</dbReference>
<dbReference type="EMBL" id="Z97985">
    <property type="status" value="NOT_ANNOTATED_CDS"/>
    <property type="molecule type" value="Genomic_DNA"/>
</dbReference>
<dbReference type="EMBL" id="BC140808">
    <property type="protein sequence ID" value="AAI40809.1"/>
    <property type="molecule type" value="mRNA"/>
</dbReference>
<dbReference type="EMBL" id="BC144603">
    <property type="protein sequence ID" value="AAI44604.1"/>
    <property type="molecule type" value="mRNA"/>
</dbReference>
<dbReference type="CCDS" id="CCDS55463.1">
    <molecule id="Q5H913-2"/>
</dbReference>
<dbReference type="RefSeq" id="NP_001155963.1">
    <molecule id="Q5H913-2"/>
    <property type="nucleotide sequence ID" value="NM_001162491.2"/>
</dbReference>
<dbReference type="SMR" id="Q5H913"/>
<dbReference type="BioGRID" id="134249">
    <property type="interactions" value="14"/>
</dbReference>
<dbReference type="FunCoup" id="Q5H913">
    <property type="interactions" value="5"/>
</dbReference>
<dbReference type="IntAct" id="Q5H913">
    <property type="interactions" value="2"/>
</dbReference>
<dbReference type="STRING" id="9606.ENSP00000398637"/>
<dbReference type="iPTMnet" id="Q5H913"/>
<dbReference type="PhosphoSitePlus" id="Q5H913"/>
<dbReference type="BioMuta" id="ARL13A"/>
<dbReference type="DMDM" id="308153411"/>
<dbReference type="jPOST" id="Q5H913"/>
<dbReference type="MassIVE" id="Q5H913"/>
<dbReference type="PaxDb" id="9606-ENSP00000398637"/>
<dbReference type="PeptideAtlas" id="Q5H913"/>
<dbReference type="ProteomicsDB" id="62860">
    <molecule id="Q5H913-1"/>
</dbReference>
<dbReference type="ProteomicsDB" id="62861">
    <molecule id="Q5H913-2"/>
</dbReference>
<dbReference type="Antibodypedia" id="51206">
    <property type="antibodies" value="34 antibodies from 9 providers"/>
</dbReference>
<dbReference type="DNASU" id="392509"/>
<dbReference type="Ensembl" id="ENST00000450049.7">
    <molecule id="Q5H913-2"/>
    <property type="protein sequence ID" value="ENSP00000398637.2"/>
    <property type="gene ID" value="ENSG00000174225.15"/>
</dbReference>
<dbReference type="Ensembl" id="ENST00000450457.6">
    <molecule id="Q5H913-1"/>
    <property type="protein sequence ID" value="ENSP00000414757.2"/>
    <property type="gene ID" value="ENSG00000174225.15"/>
</dbReference>
<dbReference type="GeneID" id="392509"/>
<dbReference type="KEGG" id="hsa:392509"/>
<dbReference type="MANE-Select" id="ENST00000450049.7">
    <molecule id="Q5H913-2"/>
    <property type="protein sequence ID" value="ENSP00000398637.2"/>
    <property type="RefSeq nucleotide sequence ID" value="NM_001162491.2"/>
    <property type="RefSeq protein sequence ID" value="NP_001155963.1"/>
</dbReference>
<dbReference type="UCSC" id="uc010nng.4">
    <molecule id="Q5H913-1"/>
    <property type="organism name" value="human"/>
</dbReference>
<dbReference type="AGR" id="HGNC:31709"/>
<dbReference type="CTD" id="392509"/>
<dbReference type="DisGeNET" id="392509"/>
<dbReference type="GeneCards" id="ARL13A"/>
<dbReference type="HGNC" id="HGNC:31709">
    <property type="gene designation" value="ARL13A"/>
</dbReference>
<dbReference type="HPA" id="ENSG00000174225">
    <property type="expression patterns" value="Tissue enriched (testis)"/>
</dbReference>
<dbReference type="neXtProt" id="NX_Q5H913"/>
<dbReference type="OpenTargets" id="ENSG00000174225"/>
<dbReference type="PharmGKB" id="PA134890660"/>
<dbReference type="VEuPathDB" id="HostDB:ENSG00000174225"/>
<dbReference type="eggNOG" id="KOG0073">
    <property type="taxonomic scope" value="Eukaryota"/>
</dbReference>
<dbReference type="GeneTree" id="ENSGT00940000161284"/>
<dbReference type="HOGENOM" id="CLU_040729_3_1_1"/>
<dbReference type="InParanoid" id="Q5H913"/>
<dbReference type="OMA" id="DRRNHQP"/>
<dbReference type="OrthoDB" id="14717at2759"/>
<dbReference type="PAN-GO" id="Q5H913">
    <property type="GO annotations" value="5 GO annotations based on evolutionary models"/>
</dbReference>
<dbReference type="PhylomeDB" id="Q5H913"/>
<dbReference type="TreeFam" id="TF105476"/>
<dbReference type="PathwayCommons" id="Q5H913"/>
<dbReference type="SignaLink" id="Q5H913"/>
<dbReference type="BioGRID-ORCS" id="392509">
    <property type="hits" value="16 hits in 765 CRISPR screens"/>
</dbReference>
<dbReference type="GenomeRNAi" id="392509"/>
<dbReference type="Pharos" id="Q5H913">
    <property type="development level" value="Tdark"/>
</dbReference>
<dbReference type="PRO" id="PR:Q5H913"/>
<dbReference type="Proteomes" id="UP000005640">
    <property type="component" value="Chromosome X"/>
</dbReference>
<dbReference type="RNAct" id="Q5H913">
    <property type="molecule type" value="protein"/>
</dbReference>
<dbReference type="Bgee" id="ENSG00000174225">
    <property type="expression patterns" value="Expressed in primordial germ cell in gonad and 98 other cell types or tissues"/>
</dbReference>
<dbReference type="ExpressionAtlas" id="Q5H913">
    <property type="expression patterns" value="baseline and differential"/>
</dbReference>
<dbReference type="GO" id="GO:0060170">
    <property type="term" value="C:ciliary membrane"/>
    <property type="evidence" value="ECO:0000318"/>
    <property type="project" value="GO_Central"/>
</dbReference>
<dbReference type="GO" id="GO:0031514">
    <property type="term" value="C:motile cilium"/>
    <property type="evidence" value="ECO:0000318"/>
    <property type="project" value="GO_Central"/>
</dbReference>
<dbReference type="GO" id="GO:0097730">
    <property type="term" value="C:non-motile cilium"/>
    <property type="evidence" value="ECO:0000318"/>
    <property type="project" value="GO_Central"/>
</dbReference>
<dbReference type="GO" id="GO:0005525">
    <property type="term" value="F:GTP binding"/>
    <property type="evidence" value="ECO:0007669"/>
    <property type="project" value="UniProtKB-KW"/>
</dbReference>
<dbReference type="GO" id="GO:0003924">
    <property type="term" value="F:GTPase activity"/>
    <property type="evidence" value="ECO:0007669"/>
    <property type="project" value="InterPro"/>
</dbReference>
<dbReference type="GO" id="GO:1905515">
    <property type="term" value="P:non-motile cilium assembly"/>
    <property type="evidence" value="ECO:0000318"/>
    <property type="project" value="GO_Central"/>
</dbReference>
<dbReference type="GO" id="GO:0097500">
    <property type="term" value="P:receptor localization to non-motile cilium"/>
    <property type="evidence" value="ECO:0000318"/>
    <property type="project" value="GO_Central"/>
</dbReference>
<dbReference type="CDD" id="cd04161">
    <property type="entry name" value="Arl2l1_Arl13_like"/>
    <property type="match status" value="1"/>
</dbReference>
<dbReference type="FunFam" id="3.40.50.300:FF:000415">
    <property type="entry name" value="ADP-ribosylation factor-like GTPase 13B"/>
    <property type="match status" value="1"/>
</dbReference>
<dbReference type="Gene3D" id="3.40.50.300">
    <property type="entry name" value="P-loop containing nucleotide triphosphate hydrolases"/>
    <property type="match status" value="1"/>
</dbReference>
<dbReference type="InterPro" id="IPR051995">
    <property type="entry name" value="Ciliary_GTPase"/>
</dbReference>
<dbReference type="InterPro" id="IPR027417">
    <property type="entry name" value="P-loop_NTPase"/>
</dbReference>
<dbReference type="InterPro" id="IPR006689">
    <property type="entry name" value="Small_GTPase_ARF/SAR"/>
</dbReference>
<dbReference type="PANTHER" id="PTHR46090:SF1">
    <property type="entry name" value="ADP-RIBOSYLATION FACTOR-LIKE PROTEIN 13A"/>
    <property type="match status" value="1"/>
</dbReference>
<dbReference type="PANTHER" id="PTHR46090">
    <property type="entry name" value="ADP-RIBOSYLATION FACTOR-LIKE PROTEIN 13B"/>
    <property type="match status" value="1"/>
</dbReference>
<dbReference type="Pfam" id="PF00025">
    <property type="entry name" value="Arf"/>
    <property type="match status" value="1"/>
</dbReference>
<dbReference type="PRINTS" id="PR00328">
    <property type="entry name" value="SAR1GTPBP"/>
</dbReference>
<dbReference type="SMART" id="SM00177">
    <property type="entry name" value="ARF"/>
    <property type="match status" value="1"/>
</dbReference>
<dbReference type="SMART" id="SM00178">
    <property type="entry name" value="SAR"/>
    <property type="match status" value="1"/>
</dbReference>
<dbReference type="SUPFAM" id="SSF52540">
    <property type="entry name" value="P-loop containing nucleoside triphosphate hydrolases"/>
    <property type="match status" value="1"/>
</dbReference>
<dbReference type="PROSITE" id="PS51417">
    <property type="entry name" value="ARF"/>
    <property type="match status" value="1"/>
</dbReference>
<comment type="alternative products">
    <event type="alternative splicing"/>
    <isoform>
        <id>Q5H913-1</id>
        <name>1</name>
        <sequence type="displayed"/>
    </isoform>
    <isoform>
        <id>Q5H913-2</id>
        <name>2</name>
        <sequence type="described" ref="VSP_042678"/>
    </isoform>
</comment>
<comment type="similarity">
    <text evidence="4">Belongs to the small GTPase superfamily. Arf family.</text>
</comment>
<keyword id="KW-0025">Alternative splicing</keyword>
<keyword id="KW-0342">GTP-binding</keyword>
<keyword id="KW-0547">Nucleotide-binding</keyword>
<keyword id="KW-1267">Proteomics identification</keyword>
<keyword id="KW-1185">Reference proteome</keyword>
<proteinExistence type="evidence at protein level"/>
<sequence length="290" mass="33003">MFRLLSSCCSCLRTTEETRRNVTIPIIGLNNSGKTVLVEAFQKLLPSKTDHCMKSELTTLLLDEYELSIYDLNGDLKGREAWPNYYAQAHGLVFVLDSSDIRRMQEVKIILTHLLSDKRVAGKPILILANKQDKKKALMPCDIIDYLLLKKLVKENKCPCRVEPCSAIRNLERRNHQPIVEGLRWLLAVIDTCQLPPTSSISISKNNTGSGERCSSHSFSTRTGMSKEKRQHLEQCSIEAKPLKSILQKEGTRLWSKKNMSVTFALDEPMKEGECSRRMRAQNTTKLCYN</sequence>
<reference key="1">
    <citation type="journal article" date="2004" name="Nat. Genet.">
        <title>Complete sequencing and characterization of 21,243 full-length human cDNAs.</title>
        <authorList>
            <person name="Ota T."/>
            <person name="Suzuki Y."/>
            <person name="Nishikawa T."/>
            <person name="Otsuki T."/>
            <person name="Sugiyama T."/>
            <person name="Irie R."/>
            <person name="Wakamatsu A."/>
            <person name="Hayashi K."/>
            <person name="Sato H."/>
            <person name="Nagai K."/>
            <person name="Kimura K."/>
            <person name="Makita H."/>
            <person name="Sekine M."/>
            <person name="Obayashi M."/>
            <person name="Nishi T."/>
            <person name="Shibahara T."/>
            <person name="Tanaka T."/>
            <person name="Ishii S."/>
            <person name="Yamamoto J."/>
            <person name="Saito K."/>
            <person name="Kawai Y."/>
            <person name="Isono Y."/>
            <person name="Nakamura Y."/>
            <person name="Nagahari K."/>
            <person name="Murakami K."/>
            <person name="Yasuda T."/>
            <person name="Iwayanagi T."/>
            <person name="Wagatsuma M."/>
            <person name="Shiratori A."/>
            <person name="Sudo H."/>
            <person name="Hosoiri T."/>
            <person name="Kaku Y."/>
            <person name="Kodaira H."/>
            <person name="Kondo H."/>
            <person name="Sugawara M."/>
            <person name="Takahashi M."/>
            <person name="Kanda K."/>
            <person name="Yokoi T."/>
            <person name="Furuya T."/>
            <person name="Kikkawa E."/>
            <person name="Omura Y."/>
            <person name="Abe K."/>
            <person name="Kamihara K."/>
            <person name="Katsuta N."/>
            <person name="Sato K."/>
            <person name="Tanikawa M."/>
            <person name="Yamazaki M."/>
            <person name="Ninomiya K."/>
            <person name="Ishibashi T."/>
            <person name="Yamashita H."/>
            <person name="Murakawa K."/>
            <person name="Fujimori K."/>
            <person name="Tanai H."/>
            <person name="Kimata M."/>
            <person name="Watanabe M."/>
            <person name="Hiraoka S."/>
            <person name="Chiba Y."/>
            <person name="Ishida S."/>
            <person name="Ono Y."/>
            <person name="Takiguchi S."/>
            <person name="Watanabe S."/>
            <person name="Yosida M."/>
            <person name="Hotuta T."/>
            <person name="Kusano J."/>
            <person name="Kanehori K."/>
            <person name="Takahashi-Fujii A."/>
            <person name="Hara H."/>
            <person name="Tanase T.-O."/>
            <person name="Nomura Y."/>
            <person name="Togiya S."/>
            <person name="Komai F."/>
            <person name="Hara R."/>
            <person name="Takeuchi K."/>
            <person name="Arita M."/>
            <person name="Imose N."/>
            <person name="Musashino K."/>
            <person name="Yuuki H."/>
            <person name="Oshima A."/>
            <person name="Sasaki N."/>
            <person name="Aotsuka S."/>
            <person name="Yoshikawa Y."/>
            <person name="Matsunawa H."/>
            <person name="Ichihara T."/>
            <person name="Shiohata N."/>
            <person name="Sano S."/>
            <person name="Moriya S."/>
            <person name="Momiyama H."/>
            <person name="Satoh N."/>
            <person name="Takami S."/>
            <person name="Terashima Y."/>
            <person name="Suzuki O."/>
            <person name="Nakagawa S."/>
            <person name="Senoh A."/>
            <person name="Mizoguchi H."/>
            <person name="Goto Y."/>
            <person name="Shimizu F."/>
            <person name="Wakebe H."/>
            <person name="Hishigaki H."/>
            <person name="Watanabe T."/>
            <person name="Sugiyama A."/>
            <person name="Takemoto M."/>
            <person name="Kawakami B."/>
            <person name="Yamazaki M."/>
            <person name="Watanabe K."/>
            <person name="Kumagai A."/>
            <person name="Itakura S."/>
            <person name="Fukuzumi Y."/>
            <person name="Fujimori Y."/>
            <person name="Komiyama M."/>
            <person name="Tashiro H."/>
            <person name="Tanigami A."/>
            <person name="Fujiwara T."/>
            <person name="Ono T."/>
            <person name="Yamada K."/>
            <person name="Fujii Y."/>
            <person name="Ozaki K."/>
            <person name="Hirao M."/>
            <person name="Ohmori Y."/>
            <person name="Kawabata A."/>
            <person name="Hikiji T."/>
            <person name="Kobatake N."/>
            <person name="Inagaki H."/>
            <person name="Ikema Y."/>
            <person name="Okamoto S."/>
            <person name="Okitani R."/>
            <person name="Kawakami T."/>
            <person name="Noguchi S."/>
            <person name="Itoh T."/>
            <person name="Shigeta K."/>
            <person name="Senba T."/>
            <person name="Matsumura K."/>
            <person name="Nakajima Y."/>
            <person name="Mizuno T."/>
            <person name="Morinaga M."/>
            <person name="Sasaki M."/>
            <person name="Togashi T."/>
            <person name="Oyama M."/>
            <person name="Hata H."/>
            <person name="Watanabe M."/>
            <person name="Komatsu T."/>
            <person name="Mizushima-Sugano J."/>
            <person name="Satoh T."/>
            <person name="Shirai Y."/>
            <person name="Takahashi Y."/>
            <person name="Nakagawa K."/>
            <person name="Okumura K."/>
            <person name="Nagase T."/>
            <person name="Nomura N."/>
            <person name="Kikuchi H."/>
            <person name="Masuho Y."/>
            <person name="Yamashita R."/>
            <person name="Nakai K."/>
            <person name="Yada T."/>
            <person name="Nakamura Y."/>
            <person name="Ohara O."/>
            <person name="Isogai T."/>
            <person name="Sugano S."/>
        </authorList>
    </citation>
    <scope>NUCLEOTIDE SEQUENCE [LARGE SCALE MRNA] (ISOFORM 1)</scope>
    <source>
        <tissue>Testis</tissue>
    </source>
</reference>
<reference key="2">
    <citation type="journal article" date="2005" name="Nature">
        <title>The DNA sequence of the human X chromosome.</title>
        <authorList>
            <person name="Ross M.T."/>
            <person name="Grafham D.V."/>
            <person name="Coffey A.J."/>
            <person name="Scherer S."/>
            <person name="McLay K."/>
            <person name="Muzny D."/>
            <person name="Platzer M."/>
            <person name="Howell G.R."/>
            <person name="Burrows C."/>
            <person name="Bird C.P."/>
            <person name="Frankish A."/>
            <person name="Lovell F.L."/>
            <person name="Howe K.L."/>
            <person name="Ashurst J.L."/>
            <person name="Fulton R.S."/>
            <person name="Sudbrak R."/>
            <person name="Wen G."/>
            <person name="Jones M.C."/>
            <person name="Hurles M.E."/>
            <person name="Andrews T.D."/>
            <person name="Scott C.E."/>
            <person name="Searle S."/>
            <person name="Ramser J."/>
            <person name="Whittaker A."/>
            <person name="Deadman R."/>
            <person name="Carter N.P."/>
            <person name="Hunt S.E."/>
            <person name="Chen R."/>
            <person name="Cree A."/>
            <person name="Gunaratne P."/>
            <person name="Havlak P."/>
            <person name="Hodgson A."/>
            <person name="Metzker M.L."/>
            <person name="Richards S."/>
            <person name="Scott G."/>
            <person name="Steffen D."/>
            <person name="Sodergren E."/>
            <person name="Wheeler D.A."/>
            <person name="Worley K.C."/>
            <person name="Ainscough R."/>
            <person name="Ambrose K.D."/>
            <person name="Ansari-Lari M.A."/>
            <person name="Aradhya S."/>
            <person name="Ashwell R.I."/>
            <person name="Babbage A.K."/>
            <person name="Bagguley C.L."/>
            <person name="Ballabio A."/>
            <person name="Banerjee R."/>
            <person name="Barker G.E."/>
            <person name="Barlow K.F."/>
            <person name="Barrett I.P."/>
            <person name="Bates K.N."/>
            <person name="Beare D.M."/>
            <person name="Beasley H."/>
            <person name="Beasley O."/>
            <person name="Beck A."/>
            <person name="Bethel G."/>
            <person name="Blechschmidt K."/>
            <person name="Brady N."/>
            <person name="Bray-Allen S."/>
            <person name="Bridgeman A.M."/>
            <person name="Brown A.J."/>
            <person name="Brown M.J."/>
            <person name="Bonnin D."/>
            <person name="Bruford E.A."/>
            <person name="Buhay C."/>
            <person name="Burch P."/>
            <person name="Burford D."/>
            <person name="Burgess J."/>
            <person name="Burrill W."/>
            <person name="Burton J."/>
            <person name="Bye J.M."/>
            <person name="Carder C."/>
            <person name="Carrel L."/>
            <person name="Chako J."/>
            <person name="Chapman J.C."/>
            <person name="Chavez D."/>
            <person name="Chen E."/>
            <person name="Chen G."/>
            <person name="Chen Y."/>
            <person name="Chen Z."/>
            <person name="Chinault C."/>
            <person name="Ciccodicola A."/>
            <person name="Clark S.Y."/>
            <person name="Clarke G."/>
            <person name="Clee C.M."/>
            <person name="Clegg S."/>
            <person name="Clerc-Blankenburg K."/>
            <person name="Clifford K."/>
            <person name="Cobley V."/>
            <person name="Cole C.G."/>
            <person name="Conquer J.S."/>
            <person name="Corby N."/>
            <person name="Connor R.E."/>
            <person name="David R."/>
            <person name="Davies J."/>
            <person name="Davis C."/>
            <person name="Davis J."/>
            <person name="Delgado O."/>
            <person name="Deshazo D."/>
            <person name="Dhami P."/>
            <person name="Ding Y."/>
            <person name="Dinh H."/>
            <person name="Dodsworth S."/>
            <person name="Draper H."/>
            <person name="Dugan-Rocha S."/>
            <person name="Dunham A."/>
            <person name="Dunn M."/>
            <person name="Durbin K.J."/>
            <person name="Dutta I."/>
            <person name="Eades T."/>
            <person name="Ellwood M."/>
            <person name="Emery-Cohen A."/>
            <person name="Errington H."/>
            <person name="Evans K.L."/>
            <person name="Faulkner L."/>
            <person name="Francis F."/>
            <person name="Frankland J."/>
            <person name="Fraser A.E."/>
            <person name="Galgoczy P."/>
            <person name="Gilbert J."/>
            <person name="Gill R."/>
            <person name="Gloeckner G."/>
            <person name="Gregory S.G."/>
            <person name="Gribble S."/>
            <person name="Griffiths C."/>
            <person name="Grocock R."/>
            <person name="Gu Y."/>
            <person name="Gwilliam R."/>
            <person name="Hamilton C."/>
            <person name="Hart E.A."/>
            <person name="Hawes A."/>
            <person name="Heath P.D."/>
            <person name="Heitmann K."/>
            <person name="Hennig S."/>
            <person name="Hernandez J."/>
            <person name="Hinzmann B."/>
            <person name="Ho S."/>
            <person name="Hoffs M."/>
            <person name="Howden P.J."/>
            <person name="Huckle E.J."/>
            <person name="Hume J."/>
            <person name="Hunt P.J."/>
            <person name="Hunt A.R."/>
            <person name="Isherwood J."/>
            <person name="Jacob L."/>
            <person name="Johnson D."/>
            <person name="Jones S."/>
            <person name="de Jong P.J."/>
            <person name="Joseph S.S."/>
            <person name="Keenan S."/>
            <person name="Kelly S."/>
            <person name="Kershaw J.K."/>
            <person name="Khan Z."/>
            <person name="Kioschis P."/>
            <person name="Klages S."/>
            <person name="Knights A.J."/>
            <person name="Kosiura A."/>
            <person name="Kovar-Smith C."/>
            <person name="Laird G.K."/>
            <person name="Langford C."/>
            <person name="Lawlor S."/>
            <person name="Leversha M."/>
            <person name="Lewis L."/>
            <person name="Liu W."/>
            <person name="Lloyd C."/>
            <person name="Lloyd D.M."/>
            <person name="Loulseged H."/>
            <person name="Loveland J.E."/>
            <person name="Lovell J.D."/>
            <person name="Lozado R."/>
            <person name="Lu J."/>
            <person name="Lyne R."/>
            <person name="Ma J."/>
            <person name="Maheshwari M."/>
            <person name="Matthews L.H."/>
            <person name="McDowall J."/>
            <person name="McLaren S."/>
            <person name="McMurray A."/>
            <person name="Meidl P."/>
            <person name="Meitinger T."/>
            <person name="Milne S."/>
            <person name="Miner G."/>
            <person name="Mistry S.L."/>
            <person name="Morgan M."/>
            <person name="Morris S."/>
            <person name="Mueller I."/>
            <person name="Mullikin J.C."/>
            <person name="Nguyen N."/>
            <person name="Nordsiek G."/>
            <person name="Nyakatura G."/>
            <person name="O'dell C.N."/>
            <person name="Okwuonu G."/>
            <person name="Palmer S."/>
            <person name="Pandian R."/>
            <person name="Parker D."/>
            <person name="Parrish J."/>
            <person name="Pasternak S."/>
            <person name="Patel D."/>
            <person name="Pearce A.V."/>
            <person name="Pearson D.M."/>
            <person name="Pelan S.E."/>
            <person name="Perez L."/>
            <person name="Porter K.M."/>
            <person name="Ramsey Y."/>
            <person name="Reichwald K."/>
            <person name="Rhodes S."/>
            <person name="Ridler K.A."/>
            <person name="Schlessinger D."/>
            <person name="Schueler M.G."/>
            <person name="Sehra H.K."/>
            <person name="Shaw-Smith C."/>
            <person name="Shen H."/>
            <person name="Sheridan E.M."/>
            <person name="Shownkeen R."/>
            <person name="Skuce C.D."/>
            <person name="Smith M.L."/>
            <person name="Sotheran E.C."/>
            <person name="Steingruber H.E."/>
            <person name="Steward C.A."/>
            <person name="Storey R."/>
            <person name="Swann R.M."/>
            <person name="Swarbreck D."/>
            <person name="Tabor P.E."/>
            <person name="Taudien S."/>
            <person name="Taylor T."/>
            <person name="Teague B."/>
            <person name="Thomas K."/>
            <person name="Thorpe A."/>
            <person name="Timms K."/>
            <person name="Tracey A."/>
            <person name="Trevanion S."/>
            <person name="Tromans A.C."/>
            <person name="d'Urso M."/>
            <person name="Verduzco D."/>
            <person name="Villasana D."/>
            <person name="Waldron L."/>
            <person name="Wall M."/>
            <person name="Wang Q."/>
            <person name="Warren J."/>
            <person name="Warry G.L."/>
            <person name="Wei X."/>
            <person name="West A."/>
            <person name="Whitehead S.L."/>
            <person name="Whiteley M.N."/>
            <person name="Wilkinson J.E."/>
            <person name="Willey D.L."/>
            <person name="Williams G."/>
            <person name="Williams L."/>
            <person name="Williamson A."/>
            <person name="Williamson H."/>
            <person name="Wilming L."/>
            <person name="Woodmansey R.L."/>
            <person name="Wray P.W."/>
            <person name="Yen J."/>
            <person name="Zhang J."/>
            <person name="Zhou J."/>
            <person name="Zoghbi H."/>
            <person name="Zorilla S."/>
            <person name="Buck D."/>
            <person name="Reinhardt R."/>
            <person name="Poustka A."/>
            <person name="Rosenthal A."/>
            <person name="Lehrach H."/>
            <person name="Meindl A."/>
            <person name="Minx P.J."/>
            <person name="Hillier L.W."/>
            <person name="Willard H.F."/>
            <person name="Wilson R.K."/>
            <person name="Waterston R.H."/>
            <person name="Rice C.M."/>
            <person name="Vaudin M."/>
            <person name="Coulson A."/>
            <person name="Nelson D.L."/>
            <person name="Weinstock G."/>
            <person name="Sulston J.E."/>
            <person name="Durbin R.M."/>
            <person name="Hubbard T."/>
            <person name="Gibbs R.A."/>
            <person name="Beck S."/>
            <person name="Rogers J."/>
            <person name="Bentley D.R."/>
        </authorList>
    </citation>
    <scope>NUCLEOTIDE SEQUENCE [LARGE SCALE GENOMIC DNA]</scope>
</reference>
<reference key="3">
    <citation type="journal article" date="2004" name="Genome Res.">
        <title>The status, quality, and expansion of the NIH full-length cDNA project: the Mammalian Gene Collection (MGC).</title>
        <authorList>
            <consortium name="The MGC Project Team"/>
        </authorList>
    </citation>
    <scope>NUCLEOTIDE SEQUENCE [LARGE SCALE MRNA] (ISOFORM 2)</scope>
    <source>
        <tissue>Testis</tissue>
    </source>
</reference>
<gene>
    <name type="primary">ARL13A</name>
</gene>
<feature type="chain" id="PRO_0000284145" description="ADP-ribosylation factor-like protein 13A">
    <location>
        <begin position="1"/>
        <end position="290"/>
    </location>
</feature>
<feature type="region of interest" description="Disordered" evidence="2">
    <location>
        <begin position="204"/>
        <end position="226"/>
    </location>
</feature>
<feature type="binding site" evidence="1">
    <location>
        <begin position="28"/>
        <end position="35"/>
    </location>
    <ligand>
        <name>GTP</name>
        <dbReference type="ChEBI" id="CHEBI:37565"/>
    </ligand>
</feature>
<feature type="binding site" evidence="1">
    <location>
        <begin position="71"/>
        <end position="75"/>
    </location>
    <ligand>
        <name>GTP</name>
        <dbReference type="ChEBI" id="CHEBI:37565"/>
    </ligand>
</feature>
<feature type="binding site" evidence="1">
    <location>
        <begin position="130"/>
        <end position="133"/>
    </location>
    <ligand>
        <name>GTP</name>
        <dbReference type="ChEBI" id="CHEBI:37565"/>
    </ligand>
</feature>
<feature type="splice variant" id="VSP_042678" description="In isoform 2." evidence="3">
    <original>KEGTRLWSKKNMSVTFALDEPMKEGECSRRMRAQNTTKLCYN</original>
    <variation>PSNQSYTH</variation>
    <location>
        <begin position="249"/>
        <end position="290"/>
    </location>
</feature>
<name>AR13A_HUMAN</name>
<accession>Q5H913</accession>
<accession>B2RTT6</accession>
<accession>B4DX50</accession>